<protein>
    <recommendedName>
        <fullName evidence="1">4-deoxy-L-threo-5-hexosulose-uronate ketol-isomerase</fullName>
        <ecNumber evidence="1">5.3.1.17</ecNumber>
    </recommendedName>
    <alternativeName>
        <fullName evidence="1">5-keto-4-deoxyuronate isomerase</fullName>
    </alternativeName>
    <alternativeName>
        <fullName evidence="1">DKI isomerase</fullName>
    </alternativeName>
</protein>
<proteinExistence type="inferred from homology"/>
<keyword id="KW-0413">Isomerase</keyword>
<keyword id="KW-0479">Metal-binding</keyword>
<keyword id="KW-0862">Zinc</keyword>
<dbReference type="EC" id="5.3.1.17" evidence="1"/>
<dbReference type="EMBL" id="AM747721">
    <property type="protein sequence ID" value="CAR54011.1"/>
    <property type="molecule type" value="Genomic_DNA"/>
</dbReference>
<dbReference type="RefSeq" id="WP_006483199.1">
    <property type="nucleotide sequence ID" value="NC_011001.1"/>
</dbReference>
<dbReference type="SMR" id="B4EH54"/>
<dbReference type="KEGG" id="bcj:BCAM0154"/>
<dbReference type="eggNOG" id="COG3717">
    <property type="taxonomic scope" value="Bacteria"/>
</dbReference>
<dbReference type="HOGENOM" id="CLU_062609_0_0_4"/>
<dbReference type="BioCyc" id="BCEN216591:G1G1V-4094-MONOMER"/>
<dbReference type="UniPathway" id="UPA00545">
    <property type="reaction ID" value="UER00826"/>
</dbReference>
<dbReference type="Proteomes" id="UP000001035">
    <property type="component" value="Chromosome 2"/>
</dbReference>
<dbReference type="GO" id="GO:0008697">
    <property type="term" value="F:4-deoxy-L-threo-5-hexosulose-uronate ketol-isomerase activity"/>
    <property type="evidence" value="ECO:0007669"/>
    <property type="project" value="UniProtKB-UniRule"/>
</dbReference>
<dbReference type="GO" id="GO:0008270">
    <property type="term" value="F:zinc ion binding"/>
    <property type="evidence" value="ECO:0007669"/>
    <property type="project" value="UniProtKB-UniRule"/>
</dbReference>
<dbReference type="GO" id="GO:0019698">
    <property type="term" value="P:D-galacturonate catabolic process"/>
    <property type="evidence" value="ECO:0007669"/>
    <property type="project" value="TreeGrafter"/>
</dbReference>
<dbReference type="GO" id="GO:0042840">
    <property type="term" value="P:D-glucuronate catabolic process"/>
    <property type="evidence" value="ECO:0007669"/>
    <property type="project" value="TreeGrafter"/>
</dbReference>
<dbReference type="GO" id="GO:0045490">
    <property type="term" value="P:pectin catabolic process"/>
    <property type="evidence" value="ECO:0007669"/>
    <property type="project" value="UniProtKB-UniRule"/>
</dbReference>
<dbReference type="CDD" id="cd20491">
    <property type="entry name" value="cupin_KduI_C"/>
    <property type="match status" value="1"/>
</dbReference>
<dbReference type="CDD" id="cd20294">
    <property type="entry name" value="cupin_KduI_N"/>
    <property type="match status" value="1"/>
</dbReference>
<dbReference type="Gene3D" id="2.60.120.10">
    <property type="entry name" value="Jelly Rolls"/>
    <property type="match status" value="1"/>
</dbReference>
<dbReference type="Gene3D" id="2.60.120.520">
    <property type="entry name" value="pectin degrading enzyme 5-keto 4- deoxyuronate isomerase, domain 1"/>
    <property type="match status" value="1"/>
</dbReference>
<dbReference type="HAMAP" id="MF_00687">
    <property type="entry name" value="KduI"/>
    <property type="match status" value="1"/>
</dbReference>
<dbReference type="InterPro" id="IPR007045">
    <property type="entry name" value="KduI"/>
</dbReference>
<dbReference type="InterPro" id="IPR021120">
    <property type="entry name" value="KduI/IolB_isomerase"/>
</dbReference>
<dbReference type="InterPro" id="IPR027449">
    <property type="entry name" value="KduI_N"/>
</dbReference>
<dbReference type="InterPro" id="IPR014710">
    <property type="entry name" value="RmlC-like_jellyroll"/>
</dbReference>
<dbReference type="InterPro" id="IPR011051">
    <property type="entry name" value="RmlC_Cupin_sf"/>
</dbReference>
<dbReference type="NCBIfam" id="NF002091">
    <property type="entry name" value="PRK00924.1"/>
    <property type="match status" value="1"/>
</dbReference>
<dbReference type="PANTHER" id="PTHR38461">
    <property type="entry name" value="4-DEOXY-L-THREO-5-HEXOSULOSE-URONATE KETOL-ISOMERASE"/>
    <property type="match status" value="1"/>
</dbReference>
<dbReference type="PANTHER" id="PTHR38461:SF1">
    <property type="entry name" value="4-DEOXY-L-THREO-5-HEXOSULOSE-URONATE KETOL-ISOMERASE"/>
    <property type="match status" value="1"/>
</dbReference>
<dbReference type="Pfam" id="PF04962">
    <property type="entry name" value="KduI"/>
    <property type="match status" value="1"/>
</dbReference>
<dbReference type="PIRSF" id="PIRSF006625">
    <property type="entry name" value="KduI"/>
    <property type="match status" value="1"/>
</dbReference>
<dbReference type="SUPFAM" id="SSF51182">
    <property type="entry name" value="RmlC-like cupins"/>
    <property type="match status" value="1"/>
</dbReference>
<organism>
    <name type="scientific">Burkholderia cenocepacia (strain ATCC BAA-245 / DSM 16553 / LMG 16656 / NCTC 13227 / J2315 / CF5610)</name>
    <name type="common">Burkholderia cepacia (strain J2315)</name>
    <dbReference type="NCBI Taxonomy" id="216591"/>
    <lineage>
        <taxon>Bacteria</taxon>
        <taxon>Pseudomonadati</taxon>
        <taxon>Pseudomonadota</taxon>
        <taxon>Betaproteobacteria</taxon>
        <taxon>Burkholderiales</taxon>
        <taxon>Burkholderiaceae</taxon>
        <taxon>Burkholderia</taxon>
        <taxon>Burkholderia cepacia complex</taxon>
    </lineage>
</organism>
<comment type="function">
    <text evidence="1">Catalyzes the isomerization of 5-dehydro-4-deoxy-D-glucuronate to 3-deoxy-D-glycero-2,5-hexodiulosonate.</text>
</comment>
<comment type="catalytic activity">
    <reaction evidence="1">
        <text>5-dehydro-4-deoxy-D-glucuronate = 3-deoxy-D-glycero-2,5-hexodiulosonate</text>
        <dbReference type="Rhea" id="RHEA:23896"/>
        <dbReference type="ChEBI" id="CHEBI:17117"/>
        <dbReference type="ChEBI" id="CHEBI:29071"/>
        <dbReference type="EC" id="5.3.1.17"/>
    </reaction>
</comment>
<comment type="cofactor">
    <cofactor evidence="1">
        <name>Zn(2+)</name>
        <dbReference type="ChEBI" id="CHEBI:29105"/>
    </cofactor>
    <text evidence="1">Binds 1 zinc ion per subunit.</text>
</comment>
<comment type="pathway">
    <text evidence="1">Glycan metabolism; pectin degradation; 2-dehydro-3-deoxy-D-gluconate from pectin: step 4/5.</text>
</comment>
<comment type="similarity">
    <text evidence="1">Belongs to the KduI family.</text>
</comment>
<evidence type="ECO:0000255" key="1">
    <source>
        <dbReference type="HAMAP-Rule" id="MF_00687"/>
    </source>
</evidence>
<feature type="chain" id="PRO_1000131876" description="4-deoxy-L-threo-5-hexosulose-uronate ketol-isomerase">
    <location>
        <begin position="1"/>
        <end position="278"/>
    </location>
</feature>
<feature type="binding site" evidence="1">
    <location>
        <position position="196"/>
    </location>
    <ligand>
        <name>Zn(2+)</name>
        <dbReference type="ChEBI" id="CHEBI:29105"/>
    </ligand>
</feature>
<feature type="binding site" evidence="1">
    <location>
        <position position="198"/>
    </location>
    <ligand>
        <name>Zn(2+)</name>
        <dbReference type="ChEBI" id="CHEBI:29105"/>
    </ligand>
</feature>
<feature type="binding site" evidence="1">
    <location>
        <position position="203"/>
    </location>
    <ligand>
        <name>Zn(2+)</name>
        <dbReference type="ChEBI" id="CHEBI:29105"/>
    </ligand>
</feature>
<feature type="binding site" evidence="1">
    <location>
        <position position="245"/>
    </location>
    <ligand>
        <name>Zn(2+)</name>
        <dbReference type="ChEBI" id="CHEBI:29105"/>
    </ligand>
</feature>
<reference key="1">
    <citation type="journal article" date="2009" name="J. Bacteriol.">
        <title>The genome of Burkholderia cenocepacia J2315, an epidemic pathogen of cystic fibrosis patients.</title>
        <authorList>
            <person name="Holden M.T."/>
            <person name="Seth-Smith H.M."/>
            <person name="Crossman L.C."/>
            <person name="Sebaihia M."/>
            <person name="Bentley S.D."/>
            <person name="Cerdeno-Tarraga A.M."/>
            <person name="Thomson N.R."/>
            <person name="Bason N."/>
            <person name="Quail M.A."/>
            <person name="Sharp S."/>
            <person name="Cherevach I."/>
            <person name="Churcher C."/>
            <person name="Goodhead I."/>
            <person name="Hauser H."/>
            <person name="Holroyd N."/>
            <person name="Mungall K."/>
            <person name="Scott P."/>
            <person name="Walker D."/>
            <person name="White B."/>
            <person name="Rose H."/>
            <person name="Iversen P."/>
            <person name="Mil-Homens D."/>
            <person name="Rocha E.P."/>
            <person name="Fialho A.M."/>
            <person name="Baldwin A."/>
            <person name="Dowson C."/>
            <person name="Barrell B.G."/>
            <person name="Govan J.R."/>
            <person name="Vandamme P."/>
            <person name="Hart C.A."/>
            <person name="Mahenthiralingam E."/>
            <person name="Parkhill J."/>
        </authorList>
    </citation>
    <scope>NUCLEOTIDE SEQUENCE [LARGE SCALE GENOMIC DNA]</scope>
    <source>
        <strain>ATCC BAA-245 / DSM 16553 / LMG 16656 / NCTC 13227 / J2315 / CF5610</strain>
    </source>
</reference>
<accession>B4EH54</accession>
<sequence length="278" mass="30333">MDVRQGIHSEHAKALDTAGLRRHFLVENVFAPDALSLTYSHIDRIIVGGAWPATRPVEVPASLGAEMGVSHLLARRELGAINIGGPGWVEVDGQRHAVGTEEAIYIGQGGQGVVFGSDDHARPAKFYLNCAPAHTAYPTRTITLAQASPETLGDAATSNRRTIYKFIVPDVLPTCQLSMGMTKLEPGSLWNTMPCHTHERRMEVYFYFNLAADAAVFHLLGEPGETRHVVVHNEQAVISPSWSIHSGVGTQAYTFIWGMAGENQVFKDMDHIAVADLR</sequence>
<gene>
    <name evidence="1" type="primary">kduI</name>
    <name type="ordered locus">BceJ2315_36230</name>
    <name type="ORF">BCAM0154</name>
</gene>
<name>KDUI_BURCJ</name>